<gene>
    <name evidence="1" type="primary">ureG</name>
    <name type="ordered locus">Msil_2008</name>
</gene>
<reference key="1">
    <citation type="journal article" date="2010" name="J. Bacteriol.">
        <title>Complete genome sequence of the aerobic facultative methanotroph Methylocella silvestris BL2.</title>
        <authorList>
            <person name="Chen Y."/>
            <person name="Crombie A."/>
            <person name="Rahman M.T."/>
            <person name="Dedysh S.N."/>
            <person name="Liesack W."/>
            <person name="Stott M.B."/>
            <person name="Alam M."/>
            <person name="Theisen A.R."/>
            <person name="Murrell J.C."/>
            <person name="Dunfield P.F."/>
        </authorList>
    </citation>
    <scope>NUCLEOTIDE SEQUENCE [LARGE SCALE GENOMIC DNA]</scope>
    <source>
        <strain>DSM 15510 / CIP 108128 / LMG 27833 / NCIMB 13906 / BL2</strain>
    </source>
</reference>
<dbReference type="EMBL" id="CP001280">
    <property type="protein sequence ID" value="ACK50950.1"/>
    <property type="molecule type" value="Genomic_DNA"/>
</dbReference>
<dbReference type="RefSeq" id="WP_012591020.1">
    <property type="nucleotide sequence ID" value="NC_011666.1"/>
</dbReference>
<dbReference type="SMR" id="B8EPU6"/>
<dbReference type="STRING" id="395965.Msil_2008"/>
<dbReference type="KEGG" id="msl:Msil_2008"/>
<dbReference type="eggNOG" id="COG0378">
    <property type="taxonomic scope" value="Bacteria"/>
</dbReference>
<dbReference type="HOGENOM" id="CLU_072144_1_0_5"/>
<dbReference type="OrthoDB" id="9802035at2"/>
<dbReference type="Proteomes" id="UP000002257">
    <property type="component" value="Chromosome"/>
</dbReference>
<dbReference type="GO" id="GO:0005737">
    <property type="term" value="C:cytoplasm"/>
    <property type="evidence" value="ECO:0007669"/>
    <property type="project" value="UniProtKB-SubCell"/>
</dbReference>
<dbReference type="GO" id="GO:0005525">
    <property type="term" value="F:GTP binding"/>
    <property type="evidence" value="ECO:0007669"/>
    <property type="project" value="UniProtKB-KW"/>
</dbReference>
<dbReference type="GO" id="GO:0003924">
    <property type="term" value="F:GTPase activity"/>
    <property type="evidence" value="ECO:0007669"/>
    <property type="project" value="InterPro"/>
</dbReference>
<dbReference type="GO" id="GO:0016151">
    <property type="term" value="F:nickel cation binding"/>
    <property type="evidence" value="ECO:0007669"/>
    <property type="project" value="UniProtKB-UniRule"/>
</dbReference>
<dbReference type="GO" id="GO:0043419">
    <property type="term" value="P:urea catabolic process"/>
    <property type="evidence" value="ECO:0007669"/>
    <property type="project" value="InterPro"/>
</dbReference>
<dbReference type="CDD" id="cd05540">
    <property type="entry name" value="UreG"/>
    <property type="match status" value="1"/>
</dbReference>
<dbReference type="FunFam" id="3.40.50.300:FF:000208">
    <property type="entry name" value="Urease accessory protein UreG"/>
    <property type="match status" value="1"/>
</dbReference>
<dbReference type="Gene3D" id="3.40.50.300">
    <property type="entry name" value="P-loop containing nucleotide triphosphate hydrolases"/>
    <property type="match status" value="1"/>
</dbReference>
<dbReference type="HAMAP" id="MF_01389">
    <property type="entry name" value="UreG"/>
    <property type="match status" value="1"/>
</dbReference>
<dbReference type="InterPro" id="IPR003495">
    <property type="entry name" value="CobW/HypB/UreG_nucleotide-bd"/>
</dbReference>
<dbReference type="InterPro" id="IPR027417">
    <property type="entry name" value="P-loop_NTPase"/>
</dbReference>
<dbReference type="InterPro" id="IPR004400">
    <property type="entry name" value="UreG"/>
</dbReference>
<dbReference type="NCBIfam" id="TIGR00101">
    <property type="entry name" value="ureG"/>
    <property type="match status" value="1"/>
</dbReference>
<dbReference type="PANTHER" id="PTHR31715">
    <property type="entry name" value="UREASE ACCESSORY PROTEIN G"/>
    <property type="match status" value="1"/>
</dbReference>
<dbReference type="PANTHER" id="PTHR31715:SF0">
    <property type="entry name" value="UREASE ACCESSORY PROTEIN G"/>
    <property type="match status" value="1"/>
</dbReference>
<dbReference type="Pfam" id="PF02492">
    <property type="entry name" value="cobW"/>
    <property type="match status" value="1"/>
</dbReference>
<dbReference type="PIRSF" id="PIRSF005624">
    <property type="entry name" value="Ni-bind_GTPase"/>
    <property type="match status" value="1"/>
</dbReference>
<dbReference type="SUPFAM" id="SSF52540">
    <property type="entry name" value="P-loop containing nucleoside triphosphate hydrolases"/>
    <property type="match status" value="1"/>
</dbReference>
<sequence length="206" mass="22021">MSETNGPFRIGIGGPVGSGKTALTDRLCKAMRERWNIAAITNDIYTKEDAEFLTRSAALAPERIMGVETGGCPHTAIREDASINLAAVDAMNARFPGLDLVFIESGGDNLAATFSPELADLTIYVIDVSAGDKIPRKGGPGITRSDLLVINKIDLAPLVEASLEVMDRDSRKMRGEKPFLFTNLKTNLGVAEIVAFIERQGGLSGV</sequence>
<protein>
    <recommendedName>
        <fullName evidence="1">Urease accessory protein UreG</fullName>
    </recommendedName>
</protein>
<evidence type="ECO:0000255" key="1">
    <source>
        <dbReference type="HAMAP-Rule" id="MF_01389"/>
    </source>
</evidence>
<proteinExistence type="inferred from homology"/>
<name>UREG_METSB</name>
<organism>
    <name type="scientific">Methylocella silvestris (strain DSM 15510 / CIP 108128 / LMG 27833 / NCIMB 13906 / BL2)</name>
    <dbReference type="NCBI Taxonomy" id="395965"/>
    <lineage>
        <taxon>Bacteria</taxon>
        <taxon>Pseudomonadati</taxon>
        <taxon>Pseudomonadota</taxon>
        <taxon>Alphaproteobacteria</taxon>
        <taxon>Hyphomicrobiales</taxon>
        <taxon>Beijerinckiaceae</taxon>
        <taxon>Methylocella</taxon>
    </lineage>
</organism>
<keyword id="KW-0143">Chaperone</keyword>
<keyword id="KW-0963">Cytoplasm</keyword>
<keyword id="KW-0342">GTP-binding</keyword>
<keyword id="KW-0996">Nickel insertion</keyword>
<keyword id="KW-0547">Nucleotide-binding</keyword>
<keyword id="KW-1185">Reference proteome</keyword>
<accession>B8EPU6</accession>
<feature type="chain" id="PRO_1000184265" description="Urease accessory protein UreG">
    <location>
        <begin position="1"/>
        <end position="206"/>
    </location>
</feature>
<feature type="binding site" evidence="1">
    <location>
        <begin position="14"/>
        <end position="21"/>
    </location>
    <ligand>
        <name>GTP</name>
        <dbReference type="ChEBI" id="CHEBI:37565"/>
    </ligand>
</feature>
<comment type="function">
    <text evidence="1">Facilitates the functional incorporation of the urease nickel metallocenter. This process requires GTP hydrolysis, probably effectuated by UreG.</text>
</comment>
<comment type="subunit">
    <text evidence="1">Homodimer. UreD, UreF and UreG form a complex that acts as a GTP-hydrolysis-dependent molecular chaperone, activating the urease apoprotein by helping to assemble the nickel containing metallocenter of UreC. The UreE protein probably delivers the nickel.</text>
</comment>
<comment type="subcellular location">
    <subcellularLocation>
        <location evidence="1">Cytoplasm</location>
    </subcellularLocation>
</comment>
<comment type="similarity">
    <text evidence="1">Belongs to the SIMIBI class G3E GTPase family. UreG subfamily.</text>
</comment>